<accession>Q68S21</accession>
<keyword id="KW-0066">ATP synthesis</keyword>
<keyword id="KW-0067">ATP-binding</keyword>
<keyword id="KW-0139">CF(1)</keyword>
<keyword id="KW-0150">Chloroplast</keyword>
<keyword id="KW-0375">Hydrogen ion transport</keyword>
<keyword id="KW-0406">Ion transport</keyword>
<keyword id="KW-0472">Membrane</keyword>
<keyword id="KW-0547">Nucleotide-binding</keyword>
<keyword id="KW-0934">Plastid</keyword>
<keyword id="KW-0793">Thylakoid</keyword>
<keyword id="KW-1278">Translocase</keyword>
<keyword id="KW-0813">Transport</keyword>
<name>ATPA_PANGI</name>
<sequence>MVTIRADEISNIIRERIEQYNREVKIVNTGTVLQVGDGIARIHGLDEVMAGELVEFEEGTVGIALNLESNNVGVVLMGDGLLIQEGSSVKATGRIAQIPVSEAYLGRVVNALAKPIDGRGEISASEYRLIESPAPGIISRRSVYEPLQTGLIAIDSMIPIGRGQRELIIGDRQTGKTAVATDTILNQQGQNVICVYVAIGQKASSVAQVVTTFQERGAMEYTIVVAEMADSPATLQYLAPYTGAALAEYFMYRERHTSIIYDDPSKQAQAYRQMSLLLRRPPGREAYPGDVFYLHSRLLERAAKLSSRLGEGSMTALPIVETQSGDVSAYIPTNVISITDGQIFLSADLFNAGIRPAINVGISVSRVGSAAQIKAMKQVAGKLKLELAQFAELEAFAQFASDLDKATQNQLARGQRLRELLKQSQSAPLTVEEQIMTIYTGTNGYLDLLEIGQVRKFLVELRTYLKTNKPKFQEIISSTKTFTEEAEALLKEAIQEQTDRFILQEQA</sequence>
<dbReference type="EC" id="7.1.2.2" evidence="1"/>
<dbReference type="EMBL" id="AY582139">
    <property type="protein sequence ID" value="AAT98494.1"/>
    <property type="molecule type" value="Genomic_DNA"/>
</dbReference>
<dbReference type="RefSeq" id="YP_086951.1">
    <property type="nucleotide sequence ID" value="NC_006290.1"/>
</dbReference>
<dbReference type="SMR" id="Q68S21"/>
<dbReference type="GeneID" id="3021558"/>
<dbReference type="GO" id="GO:0009535">
    <property type="term" value="C:chloroplast thylakoid membrane"/>
    <property type="evidence" value="ECO:0007669"/>
    <property type="project" value="UniProtKB-SubCell"/>
</dbReference>
<dbReference type="GO" id="GO:0045259">
    <property type="term" value="C:proton-transporting ATP synthase complex"/>
    <property type="evidence" value="ECO:0007669"/>
    <property type="project" value="UniProtKB-KW"/>
</dbReference>
<dbReference type="GO" id="GO:0043531">
    <property type="term" value="F:ADP binding"/>
    <property type="evidence" value="ECO:0007669"/>
    <property type="project" value="TreeGrafter"/>
</dbReference>
<dbReference type="GO" id="GO:0005524">
    <property type="term" value="F:ATP binding"/>
    <property type="evidence" value="ECO:0007669"/>
    <property type="project" value="UniProtKB-UniRule"/>
</dbReference>
<dbReference type="GO" id="GO:0046933">
    <property type="term" value="F:proton-transporting ATP synthase activity, rotational mechanism"/>
    <property type="evidence" value="ECO:0007669"/>
    <property type="project" value="UniProtKB-UniRule"/>
</dbReference>
<dbReference type="CDD" id="cd18113">
    <property type="entry name" value="ATP-synt_F1_alpha_C"/>
    <property type="match status" value="1"/>
</dbReference>
<dbReference type="CDD" id="cd18116">
    <property type="entry name" value="ATP-synt_F1_alpha_N"/>
    <property type="match status" value="1"/>
</dbReference>
<dbReference type="CDD" id="cd01132">
    <property type="entry name" value="F1-ATPase_alpha_CD"/>
    <property type="match status" value="1"/>
</dbReference>
<dbReference type="FunFam" id="1.20.150.20:FF:000001">
    <property type="entry name" value="ATP synthase subunit alpha"/>
    <property type="match status" value="1"/>
</dbReference>
<dbReference type="FunFam" id="2.40.30.20:FF:000001">
    <property type="entry name" value="ATP synthase subunit alpha"/>
    <property type="match status" value="1"/>
</dbReference>
<dbReference type="FunFam" id="3.40.50.300:FF:000002">
    <property type="entry name" value="ATP synthase subunit alpha"/>
    <property type="match status" value="1"/>
</dbReference>
<dbReference type="Gene3D" id="2.40.30.20">
    <property type="match status" value="1"/>
</dbReference>
<dbReference type="Gene3D" id="1.20.150.20">
    <property type="entry name" value="ATP synthase alpha/beta chain, C-terminal domain"/>
    <property type="match status" value="1"/>
</dbReference>
<dbReference type="Gene3D" id="3.40.50.300">
    <property type="entry name" value="P-loop containing nucleotide triphosphate hydrolases"/>
    <property type="match status" value="1"/>
</dbReference>
<dbReference type="HAMAP" id="MF_01346">
    <property type="entry name" value="ATP_synth_alpha_bact"/>
    <property type="match status" value="1"/>
</dbReference>
<dbReference type="InterPro" id="IPR023366">
    <property type="entry name" value="ATP_synth_asu-like_sf"/>
</dbReference>
<dbReference type="InterPro" id="IPR000793">
    <property type="entry name" value="ATP_synth_asu_C"/>
</dbReference>
<dbReference type="InterPro" id="IPR038376">
    <property type="entry name" value="ATP_synth_asu_C_sf"/>
</dbReference>
<dbReference type="InterPro" id="IPR033732">
    <property type="entry name" value="ATP_synth_F1_a_nt-bd_dom"/>
</dbReference>
<dbReference type="InterPro" id="IPR005294">
    <property type="entry name" value="ATP_synth_F1_asu"/>
</dbReference>
<dbReference type="InterPro" id="IPR020003">
    <property type="entry name" value="ATPase_a/bsu_AS"/>
</dbReference>
<dbReference type="InterPro" id="IPR004100">
    <property type="entry name" value="ATPase_F1/V1/A1_a/bsu_N"/>
</dbReference>
<dbReference type="InterPro" id="IPR036121">
    <property type="entry name" value="ATPase_F1/V1/A1_a/bsu_N_sf"/>
</dbReference>
<dbReference type="InterPro" id="IPR000194">
    <property type="entry name" value="ATPase_F1/V1/A1_a/bsu_nucl-bd"/>
</dbReference>
<dbReference type="InterPro" id="IPR027417">
    <property type="entry name" value="P-loop_NTPase"/>
</dbReference>
<dbReference type="NCBIfam" id="TIGR00962">
    <property type="entry name" value="atpA"/>
    <property type="match status" value="1"/>
</dbReference>
<dbReference type="NCBIfam" id="NF009884">
    <property type="entry name" value="PRK13343.1"/>
    <property type="match status" value="1"/>
</dbReference>
<dbReference type="PANTHER" id="PTHR48082">
    <property type="entry name" value="ATP SYNTHASE SUBUNIT ALPHA, MITOCHONDRIAL"/>
    <property type="match status" value="1"/>
</dbReference>
<dbReference type="PANTHER" id="PTHR48082:SF2">
    <property type="entry name" value="ATP SYNTHASE SUBUNIT ALPHA, MITOCHONDRIAL"/>
    <property type="match status" value="1"/>
</dbReference>
<dbReference type="Pfam" id="PF00006">
    <property type="entry name" value="ATP-synt_ab"/>
    <property type="match status" value="1"/>
</dbReference>
<dbReference type="Pfam" id="PF00306">
    <property type="entry name" value="ATP-synt_ab_C"/>
    <property type="match status" value="1"/>
</dbReference>
<dbReference type="Pfam" id="PF02874">
    <property type="entry name" value="ATP-synt_ab_N"/>
    <property type="match status" value="1"/>
</dbReference>
<dbReference type="PIRSF" id="PIRSF039088">
    <property type="entry name" value="F_ATPase_subunit_alpha"/>
    <property type="match status" value="1"/>
</dbReference>
<dbReference type="SUPFAM" id="SSF47917">
    <property type="entry name" value="C-terminal domain of alpha and beta subunits of F1 ATP synthase"/>
    <property type="match status" value="1"/>
</dbReference>
<dbReference type="SUPFAM" id="SSF50615">
    <property type="entry name" value="N-terminal domain of alpha and beta subunits of F1 ATP synthase"/>
    <property type="match status" value="1"/>
</dbReference>
<dbReference type="SUPFAM" id="SSF52540">
    <property type="entry name" value="P-loop containing nucleoside triphosphate hydrolases"/>
    <property type="match status" value="1"/>
</dbReference>
<dbReference type="PROSITE" id="PS00152">
    <property type="entry name" value="ATPASE_ALPHA_BETA"/>
    <property type="match status" value="1"/>
</dbReference>
<organism>
    <name type="scientific">Panax ginseng</name>
    <name type="common">Korean ginseng</name>
    <dbReference type="NCBI Taxonomy" id="4054"/>
    <lineage>
        <taxon>Eukaryota</taxon>
        <taxon>Viridiplantae</taxon>
        <taxon>Streptophyta</taxon>
        <taxon>Embryophyta</taxon>
        <taxon>Tracheophyta</taxon>
        <taxon>Spermatophyta</taxon>
        <taxon>Magnoliopsida</taxon>
        <taxon>eudicotyledons</taxon>
        <taxon>Gunneridae</taxon>
        <taxon>Pentapetalae</taxon>
        <taxon>asterids</taxon>
        <taxon>campanulids</taxon>
        <taxon>Apiales</taxon>
        <taxon>Araliaceae</taxon>
        <taxon>Panax</taxon>
    </lineage>
</organism>
<gene>
    <name evidence="1" type="primary">atpA</name>
    <name type="ORF">PSC0113</name>
</gene>
<comment type="function">
    <text evidence="1">Produces ATP from ADP in the presence of a proton gradient across the membrane. The alpha chain is a regulatory subunit.</text>
</comment>
<comment type="catalytic activity">
    <reaction evidence="1">
        <text>ATP + H2O + 4 H(+)(in) = ADP + phosphate + 5 H(+)(out)</text>
        <dbReference type="Rhea" id="RHEA:57720"/>
        <dbReference type="ChEBI" id="CHEBI:15377"/>
        <dbReference type="ChEBI" id="CHEBI:15378"/>
        <dbReference type="ChEBI" id="CHEBI:30616"/>
        <dbReference type="ChEBI" id="CHEBI:43474"/>
        <dbReference type="ChEBI" id="CHEBI:456216"/>
        <dbReference type="EC" id="7.1.2.2"/>
    </reaction>
</comment>
<comment type="subunit">
    <text evidence="1">F-type ATPases have 2 components, CF(1) - the catalytic core - and CF(0) - the membrane proton channel. CF(1) has five subunits: alpha(3), beta(3), gamma(1), delta(1), epsilon(1). CF(0) has four main subunits: a, b, b' and c.</text>
</comment>
<comment type="subcellular location">
    <subcellularLocation>
        <location evidence="1">Plastid</location>
        <location evidence="1">Chloroplast thylakoid membrane</location>
        <topology evidence="1">Peripheral membrane protein</topology>
    </subcellularLocation>
</comment>
<comment type="similarity">
    <text evidence="1">Belongs to the ATPase alpha/beta chains family.</text>
</comment>
<feature type="chain" id="PRO_0000238431" description="ATP synthase subunit alpha, chloroplastic">
    <location>
        <begin position="1"/>
        <end position="507"/>
    </location>
</feature>
<feature type="binding site" evidence="1">
    <location>
        <begin position="170"/>
        <end position="177"/>
    </location>
    <ligand>
        <name>ATP</name>
        <dbReference type="ChEBI" id="CHEBI:30616"/>
    </ligand>
</feature>
<feature type="site" description="Required for activity" evidence="1">
    <location>
        <position position="363"/>
    </location>
</feature>
<proteinExistence type="inferred from homology"/>
<protein>
    <recommendedName>
        <fullName evidence="1">ATP synthase subunit alpha, chloroplastic</fullName>
        <ecNumber evidence="1">7.1.2.2</ecNumber>
    </recommendedName>
    <alternativeName>
        <fullName evidence="1">ATP synthase F1 sector subunit alpha</fullName>
    </alternativeName>
    <alternativeName>
        <fullName evidence="1">F-ATPase subunit alpha</fullName>
    </alternativeName>
</protein>
<evidence type="ECO:0000255" key="1">
    <source>
        <dbReference type="HAMAP-Rule" id="MF_01346"/>
    </source>
</evidence>
<reference key="1">
    <citation type="journal article" date="2004" name="DNA Res.">
        <title>Complete chloroplast genome sequence from Korea ginseng (Panax schinseng Nees) and comparative analysis of sequence evolution among 17 vascular plants.</title>
        <authorList>
            <person name="Kim K.-J."/>
            <person name="Lee H.-L."/>
        </authorList>
    </citation>
    <scope>NUCLEOTIDE SEQUENCE [LARGE SCALE GENOMIC DNA]</scope>
</reference>
<geneLocation type="chloroplast"/>